<feature type="chain" id="PRO_1000015319" description="Deoxyribose-phosphate aldolase">
    <location>
        <begin position="1"/>
        <end position="219"/>
    </location>
</feature>
<feature type="active site" description="Proton donor/acceptor" evidence="1">
    <location>
        <position position="93"/>
    </location>
</feature>
<feature type="active site" description="Schiff-base intermediate with acetaldehyde" evidence="1">
    <location>
        <position position="154"/>
    </location>
</feature>
<feature type="active site" description="Proton donor/acceptor" evidence="1">
    <location>
        <position position="179"/>
    </location>
</feature>
<dbReference type="EC" id="4.1.2.4" evidence="1"/>
<dbReference type="EMBL" id="AM180088">
    <property type="protein sequence ID" value="CAJ53304.1"/>
    <property type="molecule type" value="Genomic_DNA"/>
</dbReference>
<dbReference type="RefSeq" id="WP_011572410.1">
    <property type="nucleotide sequence ID" value="NC_008212.1"/>
</dbReference>
<dbReference type="SMR" id="Q18FF3"/>
<dbReference type="STRING" id="362976.HQ_3205A"/>
<dbReference type="GeneID" id="4193912"/>
<dbReference type="KEGG" id="hwa:HQ_3205A"/>
<dbReference type="eggNOG" id="arCOG04320">
    <property type="taxonomic scope" value="Archaea"/>
</dbReference>
<dbReference type="HOGENOM" id="CLU_053595_0_2_2"/>
<dbReference type="UniPathway" id="UPA00002">
    <property type="reaction ID" value="UER00468"/>
</dbReference>
<dbReference type="Proteomes" id="UP000001975">
    <property type="component" value="Chromosome"/>
</dbReference>
<dbReference type="GO" id="GO:0005737">
    <property type="term" value="C:cytoplasm"/>
    <property type="evidence" value="ECO:0007669"/>
    <property type="project" value="UniProtKB-SubCell"/>
</dbReference>
<dbReference type="GO" id="GO:0004139">
    <property type="term" value="F:deoxyribose-phosphate aldolase activity"/>
    <property type="evidence" value="ECO:0007669"/>
    <property type="project" value="UniProtKB-UniRule"/>
</dbReference>
<dbReference type="GO" id="GO:0006018">
    <property type="term" value="P:2-deoxyribose 1-phosphate catabolic process"/>
    <property type="evidence" value="ECO:0007669"/>
    <property type="project" value="UniProtKB-UniRule"/>
</dbReference>
<dbReference type="GO" id="GO:0016052">
    <property type="term" value="P:carbohydrate catabolic process"/>
    <property type="evidence" value="ECO:0007669"/>
    <property type="project" value="TreeGrafter"/>
</dbReference>
<dbReference type="GO" id="GO:0009264">
    <property type="term" value="P:deoxyribonucleotide catabolic process"/>
    <property type="evidence" value="ECO:0007669"/>
    <property type="project" value="InterPro"/>
</dbReference>
<dbReference type="CDD" id="cd00959">
    <property type="entry name" value="DeoC"/>
    <property type="match status" value="1"/>
</dbReference>
<dbReference type="FunFam" id="3.20.20.70:FF:000044">
    <property type="entry name" value="Deoxyribose-phosphate aldolase"/>
    <property type="match status" value="1"/>
</dbReference>
<dbReference type="Gene3D" id="3.20.20.70">
    <property type="entry name" value="Aldolase class I"/>
    <property type="match status" value="1"/>
</dbReference>
<dbReference type="HAMAP" id="MF_00114">
    <property type="entry name" value="DeoC_type1"/>
    <property type="match status" value="1"/>
</dbReference>
<dbReference type="InterPro" id="IPR013785">
    <property type="entry name" value="Aldolase_TIM"/>
</dbReference>
<dbReference type="InterPro" id="IPR011343">
    <property type="entry name" value="DeoC"/>
</dbReference>
<dbReference type="InterPro" id="IPR002915">
    <property type="entry name" value="DeoC/FbaB/LacD_aldolase"/>
</dbReference>
<dbReference type="InterPro" id="IPR028581">
    <property type="entry name" value="DeoC_typeI"/>
</dbReference>
<dbReference type="NCBIfam" id="TIGR00126">
    <property type="entry name" value="deoC"/>
    <property type="match status" value="1"/>
</dbReference>
<dbReference type="PANTHER" id="PTHR10889">
    <property type="entry name" value="DEOXYRIBOSE-PHOSPHATE ALDOLASE"/>
    <property type="match status" value="1"/>
</dbReference>
<dbReference type="PANTHER" id="PTHR10889:SF1">
    <property type="entry name" value="DEOXYRIBOSE-PHOSPHATE ALDOLASE"/>
    <property type="match status" value="1"/>
</dbReference>
<dbReference type="Pfam" id="PF01791">
    <property type="entry name" value="DeoC"/>
    <property type="match status" value="1"/>
</dbReference>
<dbReference type="PIRSF" id="PIRSF001357">
    <property type="entry name" value="DeoC"/>
    <property type="match status" value="1"/>
</dbReference>
<dbReference type="SMART" id="SM01133">
    <property type="entry name" value="DeoC"/>
    <property type="match status" value="1"/>
</dbReference>
<dbReference type="SUPFAM" id="SSF51569">
    <property type="entry name" value="Aldolase"/>
    <property type="match status" value="1"/>
</dbReference>
<evidence type="ECO:0000255" key="1">
    <source>
        <dbReference type="HAMAP-Rule" id="MF_00114"/>
    </source>
</evidence>
<keyword id="KW-0963">Cytoplasm</keyword>
<keyword id="KW-0456">Lyase</keyword>
<keyword id="KW-1185">Reference proteome</keyword>
<keyword id="KW-0704">Schiff base</keyword>
<organism>
    <name type="scientific">Haloquadratum walsbyi (strain DSM 16790 / HBSQ001)</name>
    <dbReference type="NCBI Taxonomy" id="362976"/>
    <lineage>
        <taxon>Archaea</taxon>
        <taxon>Methanobacteriati</taxon>
        <taxon>Methanobacteriota</taxon>
        <taxon>Stenosarchaea group</taxon>
        <taxon>Halobacteria</taxon>
        <taxon>Halobacteriales</taxon>
        <taxon>Haloferacaceae</taxon>
        <taxon>Haloquadratum</taxon>
    </lineage>
</organism>
<comment type="function">
    <text evidence="1">Catalyzes a reversible aldol reaction between acetaldehyde and D-glyceraldehyde 3-phosphate to generate 2-deoxy-D-ribose 5-phosphate.</text>
</comment>
<comment type="catalytic activity">
    <reaction evidence="1">
        <text>2-deoxy-D-ribose 5-phosphate = D-glyceraldehyde 3-phosphate + acetaldehyde</text>
        <dbReference type="Rhea" id="RHEA:12821"/>
        <dbReference type="ChEBI" id="CHEBI:15343"/>
        <dbReference type="ChEBI" id="CHEBI:59776"/>
        <dbReference type="ChEBI" id="CHEBI:62877"/>
        <dbReference type="EC" id="4.1.2.4"/>
    </reaction>
</comment>
<comment type="pathway">
    <text evidence="1">Carbohydrate degradation; 2-deoxy-D-ribose 1-phosphate degradation; D-glyceraldehyde 3-phosphate and acetaldehyde from 2-deoxy-alpha-D-ribose 1-phosphate: step 2/2.</text>
</comment>
<comment type="subcellular location">
    <subcellularLocation>
        <location evidence="1">Cytoplasm</location>
    </subcellularLocation>
</comment>
<comment type="similarity">
    <text evidence="1">Belongs to the DeoC/FbaB aldolase family. DeoC type 1 subfamily.</text>
</comment>
<gene>
    <name evidence="1" type="primary">deoC</name>
    <name type="ordered locus">HQ_3205A</name>
</gene>
<proteinExistence type="inferred from homology"/>
<sequence>MNIEELAARIDHTVLGPTTTMDEVTDVLSDAAAYGMNACIPPCYLDAAGDTDMVTDSGVTLVSVIGFPHGQHASIAKRKEAVTAWQAGADEIDVVLNIGRLKTSATETVTHDIAEVVAAVPIPVKVIIETTLLNDDEKRRACKVAVDADADFIKTSTGFANGGATTADVEVLSSYLPVKASGGISSYETAKSMLDAGAERIGASAGVEILEDAPDIYYD</sequence>
<reference key="1">
    <citation type="journal article" date="2006" name="BMC Genomics">
        <title>The genome of the square archaeon Haloquadratum walsbyi: life at the limits of water activity.</title>
        <authorList>
            <person name="Bolhuis H."/>
            <person name="Palm P."/>
            <person name="Wende A."/>
            <person name="Falb M."/>
            <person name="Rampp M."/>
            <person name="Rodriguez-Valera F."/>
            <person name="Pfeiffer F."/>
            <person name="Oesterhelt D."/>
        </authorList>
    </citation>
    <scope>NUCLEOTIDE SEQUENCE [LARGE SCALE GENOMIC DNA]</scope>
    <source>
        <strain>DSM 16790 / HBSQ001</strain>
    </source>
</reference>
<protein>
    <recommendedName>
        <fullName evidence="1">Deoxyribose-phosphate aldolase</fullName>
        <shortName evidence="1">DERA</shortName>
        <ecNumber evidence="1">4.1.2.4</ecNumber>
    </recommendedName>
    <alternativeName>
        <fullName evidence="1">2-deoxy-D-ribose 5-phosphate aldolase</fullName>
    </alternativeName>
    <alternativeName>
        <fullName evidence="1">Phosphodeoxyriboaldolase</fullName>
        <shortName evidence="1">Deoxyriboaldolase</shortName>
    </alternativeName>
</protein>
<accession>Q18FF3</accession>
<name>DEOC_HALWD</name>